<organism>
    <name type="scientific">Bos taurus</name>
    <name type="common">Bovine</name>
    <dbReference type="NCBI Taxonomy" id="9913"/>
    <lineage>
        <taxon>Eukaryota</taxon>
        <taxon>Metazoa</taxon>
        <taxon>Chordata</taxon>
        <taxon>Craniata</taxon>
        <taxon>Vertebrata</taxon>
        <taxon>Euteleostomi</taxon>
        <taxon>Mammalia</taxon>
        <taxon>Eutheria</taxon>
        <taxon>Laurasiatheria</taxon>
        <taxon>Artiodactyla</taxon>
        <taxon>Ruminantia</taxon>
        <taxon>Pecora</taxon>
        <taxon>Bovidae</taxon>
        <taxon>Bovinae</taxon>
        <taxon>Bos</taxon>
    </lineage>
</organism>
<name>PIGR_BOVIN</name>
<reference key="1">
    <citation type="journal article" date="1995" name="DNA Cell Biol.">
        <title>Cloning and characterization of two forms of bovine polymeric immunoglobulin receptor cDNA.</title>
        <authorList>
            <person name="Kulseth M.A."/>
            <person name="Krajci P."/>
            <person name="Myklebost O."/>
            <person name="Rogne S."/>
        </authorList>
    </citation>
    <scope>NUCLEOTIDE SEQUENCE [MRNA]</scope>
    <scope>ALTERNATIVE SPLICING</scope>
    <source>
        <tissue>Mammary gland</tissue>
        <tissue>Small intestine</tissue>
    </source>
</reference>
<reference key="2">
    <citation type="journal article" date="1995" name="Gene">
        <title>Cloning and characterization of the bovine polymeric immunoglobulin receptor-encoding cDNA.</title>
        <authorList>
            <person name="Verbeet M.P."/>
            <person name="Vermeer H."/>
            <person name="Warmerdam G.C."/>
            <person name="de Boer H.A."/>
            <person name="Lee S.H."/>
        </authorList>
    </citation>
    <scope>NUCLEOTIDE SEQUENCE [MRNA]</scope>
    <source>
        <tissue>Mammary gland</tissue>
    </source>
</reference>
<proteinExistence type="evidence at transcript level"/>
<sequence length="757" mass="82435">MSRLFLACLLAIFPVVSMKSPIFGPEEVTSVEGRSVSIKCYYPPTSVNRHTRKYWCRQGAQGRCTTLISSEGYVSDDYVGRANLTNFPESGTFVVDISHLTHKDSGRYKCGLGISSRGLNFDVSLEVSQDPAQASHAHVYTVDLGRTVTINCPFTRANSEKRKSLCKKTIQDCFQVVDSTGYVSNSYKDRAHISILGTNTLVFSVVINRVKLSDAGMYVCQAGDDAKADKINIDLQVLEPEPELVYGDLRSSVTFDCSLGPEVANVPKFLCQKKNGGACNVVINTLGKKAQDFQGRIVSVPKDNGVFSVHITSLRKEDAGRYVCGAQPEGEPQDGWPVQAWQLFVNEETAIPASPSVVKGVRGGSVTVSCPYNPKDANSAKYWCHWEEAQNGRCPRLVESRGLIKEQYEGRLALLTEPGNGTYTVILNQLTDQDTGFYWCVTDGDTRWISTVELKVVQGEPSLKVPKNVTAWLGEPLKLSCHFPCKFYSFEKYWCKWSNRGCSALPTQNDGPSQAFVSCDQNSQVVSLNLDTVTKEDEGWYWCGVKEGPRYGETAAVYVAVESRVKGSQGAKQVKAAPAGAAIQSRAGEIQNKALLDPSFFAKESVKDAAGGPGAPADPGRPTGYSGSSKALVSTLVPLALVLVAGVVAIGVVRARHRKNVDRISIRSYRTDISMSDFENSRDFEGRDNMGASPEAQETSLGGKDEFATTTEDTVESKEPKKAKRSSKEEADEAFTTFLLQAKNLASAATQNGPTEA</sequence>
<keyword id="KW-0025">Alternative splicing</keyword>
<keyword id="KW-1003">Cell membrane</keyword>
<keyword id="KW-1015">Disulfide bond</keyword>
<keyword id="KW-0325">Glycoprotein</keyword>
<keyword id="KW-0393">Immunoglobulin domain</keyword>
<keyword id="KW-0472">Membrane</keyword>
<keyword id="KW-0597">Phosphoprotein</keyword>
<keyword id="KW-1185">Reference proteome</keyword>
<keyword id="KW-0677">Repeat</keyword>
<keyword id="KW-0964">Secreted</keyword>
<keyword id="KW-0732">Signal</keyword>
<keyword id="KW-0812">Transmembrane</keyword>
<keyword id="KW-1133">Transmembrane helix</keyword>
<protein>
    <recommendedName>
        <fullName>Polymeric immunoglobulin receptor</fullName>
        <shortName>PIgR</shortName>
        <shortName>Poly-Ig receptor</shortName>
    </recommendedName>
    <component>
        <recommendedName>
            <fullName>Secretory component</fullName>
        </recommendedName>
    </component>
</protein>
<evidence type="ECO:0000250" key="1">
    <source>
        <dbReference type="UniProtKB" id="O70570"/>
    </source>
</evidence>
<evidence type="ECO:0000250" key="2">
    <source>
        <dbReference type="UniProtKB" id="P01833"/>
    </source>
</evidence>
<evidence type="ECO:0000250" key="3">
    <source>
        <dbReference type="UniProtKB" id="P15083"/>
    </source>
</evidence>
<evidence type="ECO:0000255" key="4"/>
<evidence type="ECO:0000255" key="5">
    <source>
        <dbReference type="PROSITE-ProRule" id="PRU00114"/>
    </source>
</evidence>
<evidence type="ECO:0000256" key="6">
    <source>
        <dbReference type="SAM" id="MobiDB-lite"/>
    </source>
</evidence>
<evidence type="ECO:0000305" key="7"/>
<comment type="function">
    <molecule>Polymeric immunoglobulin receptor</molecule>
    <text evidence="2">Mediates selective transcytosis of polymeric IgA and IgM across mucosal epithelial cells. Binds polymeric IgA and IgM at the basolateral surface of epithelial cells. The complex is then transported across the cell to be secreted at the apical surface. During this process, a cleavage occurs that separates the extracellular (known as the secretory component) from the transmembrane segment.</text>
</comment>
<comment type="function">
    <molecule>Secretory component</molecule>
    <text evidence="2">Through its N-linked glycans ensures anchoring of secretory IgA (sIgA) molecules to mucus lining the epithelial surface to neutralize extracellular pathogens. On its own (free form) may act as a non-specific microbial scavenger to prevent pathogen interaction with epithelial cells.</text>
</comment>
<comment type="subunit">
    <text evidence="2">Interacts (mainly via CDR1-like domain) with dimeric IgA. Interacts (mainly via CDR2-like domain) with pentameric IgM.</text>
</comment>
<comment type="subunit">
    <molecule>Secretory component</molecule>
    <text evidence="2">Either free or part of the secretory IgA (sIgA) complex that consists of two, four or five IgA monomers, and two additional non-Ig polypeptides, namely the JCHAIN and the secretory component (the proteolytic product of PIGR). Free secretory component interacts with bacterial antigens toxA of C.difficile and eae of E.coli.</text>
</comment>
<comment type="subcellular location">
    <molecule>Polymeric immunoglobulin receptor</molecule>
    <subcellularLocation>
        <location evidence="2">Cell membrane</location>
        <topology evidence="4">Single-pass type I membrane protein</topology>
    </subcellularLocation>
</comment>
<comment type="subcellular location">
    <molecule>Secretory component</molecule>
    <subcellularLocation>
        <location evidence="2">Secreted</location>
    </subcellularLocation>
</comment>
<comment type="alternative products">
    <event type="alternative splicing"/>
    <isoform>
        <id>P81265-1</id>
        <name>Long</name>
        <sequence type="displayed"/>
    </isoform>
    <isoform>
        <id>P81265-2</id>
        <name>Short</name>
        <sequence type="described" ref="VSP_002547"/>
    </isoform>
</comment>
<comment type="tissue specificity">
    <text>Found in mammary gland, jejunum, lung, kidney and small intestine.</text>
</comment>
<comment type="domain">
    <text evidence="2">The Ig-like V-type 1/D1 domain contains three complementarity determining region-like loops CDR1-3, which mediate interaction with IgA and IgM.</text>
</comment>
<comment type="PTM">
    <text>In the absence of dimeric IgA, Ser-727 is phosphorylated which allows PIGR to function normally.</text>
</comment>
<comment type="PTM">
    <text evidence="2">N-glycosylated. N-glycosylation is required for anchoring IgA molecules to mucus, but is not necessary for Ig binding.</text>
</comment>
<accession>P81265</accession>
<gene>
    <name type="primary">PIGR</name>
</gene>
<dbReference type="EMBL" id="L04797">
    <property type="protein sequence ID" value="AAC41620.1"/>
    <property type="molecule type" value="mRNA"/>
</dbReference>
<dbReference type="EMBL" id="X81371">
    <property type="protein sequence ID" value="CAA57136.1"/>
    <property type="molecule type" value="mRNA"/>
</dbReference>
<dbReference type="PIR" id="I45956">
    <property type="entry name" value="I45956"/>
</dbReference>
<dbReference type="PIR" id="S48841">
    <property type="entry name" value="S48841"/>
</dbReference>
<dbReference type="RefSeq" id="NP_776568.1">
    <property type="nucleotide sequence ID" value="NM_174143.1"/>
</dbReference>
<dbReference type="SMR" id="P81265"/>
<dbReference type="FunCoup" id="P81265">
    <property type="interactions" value="81"/>
</dbReference>
<dbReference type="STRING" id="9913.ENSBTAP00000026377"/>
<dbReference type="CarbonylDB" id="P81265"/>
<dbReference type="GlyCosmos" id="P81265">
    <property type="glycosylation" value="3 sites, No reported glycans"/>
</dbReference>
<dbReference type="GlyGen" id="P81265">
    <property type="glycosylation" value="3 sites"/>
</dbReference>
<dbReference type="PaxDb" id="9913-ENSBTAP00000026377"/>
<dbReference type="PeptideAtlas" id="P81265"/>
<dbReference type="GeneID" id="281401"/>
<dbReference type="KEGG" id="bta:281401"/>
<dbReference type="CTD" id="5284"/>
<dbReference type="eggNOG" id="ENOG502QPKT">
    <property type="taxonomic scope" value="Eukaryota"/>
</dbReference>
<dbReference type="InParanoid" id="P81265"/>
<dbReference type="OrthoDB" id="6157407at2759"/>
<dbReference type="Proteomes" id="UP000009136">
    <property type="component" value="Unplaced"/>
</dbReference>
<dbReference type="GO" id="GO:0005886">
    <property type="term" value="C:plasma membrane"/>
    <property type="evidence" value="ECO:0000250"/>
    <property type="project" value="UniProtKB"/>
</dbReference>
<dbReference type="GO" id="GO:0071751">
    <property type="term" value="C:secretory IgA immunoglobulin complex"/>
    <property type="evidence" value="ECO:0000250"/>
    <property type="project" value="UniProtKB"/>
</dbReference>
<dbReference type="GO" id="GO:0004888">
    <property type="term" value="F:transmembrane signaling receptor activity"/>
    <property type="evidence" value="ECO:0000318"/>
    <property type="project" value="GO_Central"/>
</dbReference>
<dbReference type="GO" id="GO:0002415">
    <property type="term" value="P:immunoglobulin transcytosis in epithelial cells mediated by polymeric immunoglobulin receptor"/>
    <property type="evidence" value="ECO:0000250"/>
    <property type="project" value="UniProtKB"/>
</dbReference>
<dbReference type="GO" id="GO:0007165">
    <property type="term" value="P:signal transduction"/>
    <property type="evidence" value="ECO:0000318"/>
    <property type="project" value="GO_Central"/>
</dbReference>
<dbReference type="CDD" id="cd05716">
    <property type="entry name" value="IgV_pIgR_like"/>
    <property type="match status" value="5"/>
</dbReference>
<dbReference type="FunFam" id="2.60.40.10:FF:001340">
    <property type="entry name" value="Polymeric immunoglobulin receptor"/>
    <property type="match status" value="1"/>
</dbReference>
<dbReference type="Gene3D" id="2.60.40.10">
    <property type="entry name" value="Immunoglobulins"/>
    <property type="match status" value="5"/>
</dbReference>
<dbReference type="InterPro" id="IPR050671">
    <property type="entry name" value="CD300_family_receptors"/>
</dbReference>
<dbReference type="InterPro" id="IPR007110">
    <property type="entry name" value="Ig-like_dom"/>
</dbReference>
<dbReference type="InterPro" id="IPR036179">
    <property type="entry name" value="Ig-like_dom_sf"/>
</dbReference>
<dbReference type="InterPro" id="IPR013783">
    <property type="entry name" value="Ig-like_fold"/>
</dbReference>
<dbReference type="InterPro" id="IPR003599">
    <property type="entry name" value="Ig_sub"/>
</dbReference>
<dbReference type="InterPro" id="IPR013106">
    <property type="entry name" value="Ig_V-set"/>
</dbReference>
<dbReference type="PANTHER" id="PTHR11860:SF82">
    <property type="entry name" value="POLYMERIC IMMUNOGLOBULIN RECEPTOR"/>
    <property type="match status" value="1"/>
</dbReference>
<dbReference type="PANTHER" id="PTHR11860">
    <property type="entry name" value="POLYMERIC-IMMUNOGLOBULIN RECEPTOR"/>
    <property type="match status" value="1"/>
</dbReference>
<dbReference type="Pfam" id="PF07686">
    <property type="entry name" value="V-set"/>
    <property type="match status" value="4"/>
</dbReference>
<dbReference type="SMART" id="SM00409">
    <property type="entry name" value="IG"/>
    <property type="match status" value="5"/>
</dbReference>
<dbReference type="SMART" id="SM00406">
    <property type="entry name" value="IGv"/>
    <property type="match status" value="4"/>
</dbReference>
<dbReference type="SUPFAM" id="SSF48726">
    <property type="entry name" value="Immunoglobulin"/>
    <property type="match status" value="5"/>
</dbReference>
<dbReference type="PROSITE" id="PS50835">
    <property type="entry name" value="IG_LIKE"/>
    <property type="match status" value="2"/>
</dbReference>
<feature type="signal peptide" evidence="4">
    <location>
        <begin position="1"/>
        <end position="18"/>
    </location>
</feature>
<feature type="chain" id="PRO_0000014898" description="Polymeric immunoglobulin receptor">
    <location>
        <begin position="19"/>
        <end position="757"/>
    </location>
</feature>
<feature type="chain" id="PRO_0000014899" description="Secretory component">
    <location>
        <begin position="19"/>
        <end position="599"/>
    </location>
</feature>
<feature type="topological domain" description="Extracellular" evidence="4">
    <location>
        <begin position="19"/>
        <end position="632"/>
    </location>
</feature>
<feature type="transmembrane region" description="Helical" evidence="4">
    <location>
        <begin position="633"/>
        <end position="653"/>
    </location>
</feature>
<feature type="topological domain" description="Cytoplasmic" evidence="4">
    <location>
        <begin position="654"/>
        <end position="757"/>
    </location>
</feature>
<feature type="domain" description="Ig-like V-type 1; required for binding to polymeric IgA and IgM" evidence="2">
    <location>
        <begin position="19"/>
        <end position="126"/>
    </location>
</feature>
<feature type="domain" description="Ig-like V-type 2">
    <location>
        <begin position="145"/>
        <end position="237"/>
    </location>
</feature>
<feature type="domain" description="Ig-like V-type 3">
    <location>
        <begin position="250"/>
        <end position="341"/>
    </location>
</feature>
<feature type="domain" description="Ig-like V-type 4">
    <location>
        <begin position="353"/>
        <end position="457"/>
    </location>
</feature>
<feature type="domain" description="Ig-like V-type 5">
    <location>
        <begin position="461"/>
        <end position="560"/>
    </location>
</feature>
<feature type="region of interest" description="Disordered" evidence="6">
    <location>
        <begin position="607"/>
        <end position="627"/>
    </location>
</feature>
<feature type="region of interest" description="Disordered" evidence="6">
    <location>
        <begin position="679"/>
        <end position="730"/>
    </location>
</feature>
<feature type="compositionally biased region" description="Basic and acidic residues" evidence="6">
    <location>
        <begin position="679"/>
        <end position="688"/>
    </location>
</feature>
<feature type="modified residue" description="Phosphoserine" evidence="3">
    <location>
        <position position="665"/>
    </location>
</feature>
<feature type="modified residue" description="Phosphoserine" evidence="1">
    <location>
        <position position="674"/>
    </location>
</feature>
<feature type="modified residue" description="Phosphoserine" evidence="3">
    <location>
        <position position="681"/>
    </location>
</feature>
<feature type="modified residue" description="Phosphoserine" evidence="1">
    <location>
        <position position="727"/>
    </location>
</feature>
<feature type="glycosylation site" description="N-linked (GlcNAc...) asparagine" evidence="4">
    <location>
        <position position="83"/>
    </location>
</feature>
<feature type="glycosylation site" description="N-linked (GlcNAc...) asparagine" evidence="4">
    <location>
        <position position="420"/>
    </location>
</feature>
<feature type="glycosylation site" description="N-linked (GlcNAc...) asparagine" evidence="4">
    <location>
        <position position="468"/>
    </location>
</feature>
<feature type="disulfide bond" evidence="5">
    <location>
        <begin position="40"/>
        <end position="110"/>
    </location>
</feature>
<feature type="disulfide bond" evidence="5">
    <location>
        <begin position="56"/>
        <end position="64"/>
    </location>
</feature>
<feature type="disulfide bond" evidence="5">
    <location>
        <begin position="152"/>
        <end position="220"/>
    </location>
</feature>
<feature type="disulfide bond" evidence="5">
    <location>
        <begin position="257"/>
        <end position="324"/>
    </location>
</feature>
<feature type="disulfide bond" evidence="5">
    <location>
        <begin position="271"/>
        <end position="279"/>
    </location>
</feature>
<feature type="disulfide bond" evidence="5">
    <location>
        <begin position="370"/>
        <end position="440"/>
    </location>
</feature>
<feature type="disulfide bond" evidence="5">
    <location>
        <begin position="384"/>
        <end position="394"/>
    </location>
</feature>
<feature type="disulfide bond" evidence="5">
    <location>
        <begin position="481"/>
        <end position="543"/>
    </location>
</feature>
<feature type="disulfide bond" evidence="5">
    <location>
        <begin position="485"/>
        <end position="519"/>
    </location>
</feature>
<feature type="disulfide bond" evidence="5">
    <location>
        <begin position="495"/>
        <end position="502"/>
    </location>
</feature>
<feature type="splice variant" id="VSP_002547" description="In isoform Short." evidence="7">
    <location>
        <begin position="129"/>
        <end position="346"/>
    </location>
</feature>
<feature type="sequence variant">
    <original>T</original>
    <variation>S</variation>
    <location>
        <position position="29"/>
    </location>
</feature>
<feature type="sequence variant">
    <original>V</original>
    <variation>I</variation>
    <location>
        <position position="142"/>
    </location>
</feature>
<feature type="sequence variant">
    <original>I</original>
    <variation>M</variation>
    <location>
        <position position="404"/>
    </location>
</feature>
<feature type="sequence variant">
    <original>A</original>
    <variation>V</variation>
    <location>
        <position position="413"/>
    </location>
</feature>
<feature type="sequence variant">
    <original>T</original>
    <variation>A</variation>
    <location>
        <position position="435"/>
    </location>
</feature>